<evidence type="ECO:0000255" key="1">
    <source>
        <dbReference type="HAMAP-Rule" id="MF_03185"/>
    </source>
</evidence>
<feature type="chain" id="PRO_0000112049" description="Pyrophosphate--fructose 6-phosphate 1-phosphotransferase subunit beta">
    <location>
        <begin position="1"/>
        <end position="552"/>
    </location>
</feature>
<feature type="active site" description="Proton acceptor" evidence="1">
    <location>
        <position position="214"/>
    </location>
</feature>
<feature type="binding site" evidence="1">
    <location>
        <position position="90"/>
    </location>
    <ligand>
        <name>diphosphate</name>
        <dbReference type="ChEBI" id="CHEBI:33019"/>
    </ligand>
</feature>
<feature type="binding site" evidence="1">
    <location>
        <position position="184"/>
    </location>
    <ligand>
        <name>Mg(2+)</name>
        <dbReference type="ChEBI" id="CHEBI:18420"/>
        <note>catalytic</note>
    </ligand>
</feature>
<feature type="binding site" description="in other chain" evidence="1">
    <location>
        <begin position="212"/>
        <end position="214"/>
    </location>
    <ligand>
        <name>substrate</name>
        <note>ligand shared between dimeric partners</note>
    </ligand>
</feature>
<feature type="binding site" evidence="1">
    <location>
        <begin position="251"/>
        <end position="252"/>
    </location>
    <ligand>
        <name>substrate</name>
        <note>ligand shared between dimeric partners</note>
    </ligand>
</feature>
<feature type="binding site" description="in other chain" evidence="1">
    <location>
        <begin position="259"/>
        <end position="261"/>
    </location>
    <ligand>
        <name>substrate</name>
        <note>ligand shared between dimeric partners</note>
    </ligand>
</feature>
<feature type="binding site" description="in other chain" evidence="1">
    <location>
        <position position="320"/>
    </location>
    <ligand>
        <name>substrate</name>
        <note>ligand shared between dimeric partners</note>
    </ligand>
</feature>
<feature type="binding site" description="in other chain" evidence="1">
    <location>
        <begin position="425"/>
        <end position="428"/>
    </location>
    <ligand>
        <name>substrate</name>
        <note>ligand shared between dimeric partners</note>
    </ligand>
</feature>
<feature type="site" description="Important for catalytic activity and substrate specificity; stabilizes the transition state when the phosphoryl donor is PPi; prevents ATP from binding by mimicking the alpha-phosphate group of ATP" evidence="1">
    <location>
        <position position="185"/>
    </location>
</feature>
<feature type="site" description="Important for catalytic activity; stabilizes the transition state when the phosphoryl donor is PPi" evidence="1">
    <location>
        <position position="211"/>
    </location>
</feature>
<protein>
    <recommendedName>
        <fullName evidence="1">Pyrophosphate--fructose 6-phosphate 1-phosphotransferase subunit beta</fullName>
        <shortName evidence="1">PFP</shortName>
        <ecNumber evidence="1">2.7.1.90</ecNumber>
    </recommendedName>
    <alternativeName>
        <fullName evidence="1">6-phosphofructokinase, pyrophosphate dependent</fullName>
    </alternativeName>
    <alternativeName>
        <fullName evidence="1">PPi-PFK</fullName>
    </alternativeName>
    <alternativeName>
        <fullName evidence="1">Pyrophosphate-dependent 6-phosphofructose-1-kinase</fullName>
    </alternativeName>
</protein>
<organism>
    <name type="scientific">Ricinus communis</name>
    <name type="common">Castor bean</name>
    <dbReference type="NCBI Taxonomy" id="3988"/>
    <lineage>
        <taxon>Eukaryota</taxon>
        <taxon>Viridiplantae</taxon>
        <taxon>Streptophyta</taxon>
        <taxon>Embryophyta</taxon>
        <taxon>Tracheophyta</taxon>
        <taxon>Spermatophyta</taxon>
        <taxon>Magnoliopsida</taxon>
        <taxon>eudicotyledons</taxon>
        <taxon>Gunneridae</taxon>
        <taxon>Pentapetalae</taxon>
        <taxon>rosids</taxon>
        <taxon>fabids</taxon>
        <taxon>Malpighiales</taxon>
        <taxon>Euphorbiaceae</taxon>
        <taxon>Acalyphoideae</taxon>
        <taxon>Acalypheae</taxon>
        <taxon>Ricinus</taxon>
    </lineage>
</organism>
<sequence length="552" mass="60114">MATPNSGRAASVYSEVQSSRIEHVLPLPSVLNHPFKIVQGPPSSAAGNPDEIAKLFPNLFGQPSAMLVPDVADSLDSNQQLKIGLVLSGGQAPGGHNVISGIFDYLQDRAKGSILYGFRGGPAGIMKCNYVQLTADYIHPYRNQGGFDMICSGRDKIETPEQFKQAEETAGKLDLNGLVVIGGDDSNTNACLLAENFRSKNLKTRVIGCPKTIDGDLKCKEVPTSFGFDTACKIYSEMIGNVMIDARSTGKYYHFVRLMGRAASHITLECALQTHPNITIIGEEVAAKKLALKDVTDYIVDVICKRADLGYNYGVILIPEGLIDFIPEVQNLIAELNEILAHDVVDEGGLWKKKLTSQSLQLFEFLPVAIQEQLMLERDPHGNVQVAKIETEKMLIQMVETELEKRKQQGTYKAHFKGQSHFFGYEGRCGLPTNFDSTYCYALGYAAGALLHSGKTGLISSVGNLGAPVAEWTVGGTALTSLMDVERRHGKFKPVIKKAMVELEGAPFKKFASLREEWALKNRYVSPGPIQFMGPGSDAASHTLLLELGSVA</sequence>
<accession>Q41141</accession>
<gene>
    <name evidence="1" type="primary">PFP-BETA</name>
</gene>
<reference key="1">
    <citation type="journal article" date="1995" name="Gene">
        <title>Structure of the genes encoding the alpha- and beta-subunits of castor pyrophosphate-dependent phosphofructokinase.</title>
        <authorList>
            <person name="Todd J.F."/>
            <person name="Blakeley S.D."/>
            <person name="Dennis D.T."/>
        </authorList>
    </citation>
    <scope>NUCLEOTIDE SEQUENCE [GENOMIC DNA]</scope>
</reference>
<dbReference type="EC" id="2.7.1.90" evidence="1"/>
<dbReference type="EMBL" id="Z32850">
    <property type="protein sequence ID" value="CAA83683.1"/>
    <property type="molecule type" value="Genomic_DNA"/>
</dbReference>
<dbReference type="PIR" id="T10107">
    <property type="entry name" value="T10107"/>
</dbReference>
<dbReference type="SMR" id="Q41141"/>
<dbReference type="eggNOG" id="KOG2440">
    <property type="taxonomic scope" value="Eukaryota"/>
</dbReference>
<dbReference type="UniPathway" id="UPA00109">
    <property type="reaction ID" value="UER00182"/>
</dbReference>
<dbReference type="GO" id="GO:0005737">
    <property type="term" value="C:cytoplasm"/>
    <property type="evidence" value="ECO:0007669"/>
    <property type="project" value="UniProtKB-SubCell"/>
</dbReference>
<dbReference type="GO" id="GO:0003872">
    <property type="term" value="F:6-phosphofructokinase activity"/>
    <property type="evidence" value="ECO:0007669"/>
    <property type="project" value="UniProtKB-UniRule"/>
</dbReference>
<dbReference type="GO" id="GO:0005524">
    <property type="term" value="F:ATP binding"/>
    <property type="evidence" value="ECO:0007669"/>
    <property type="project" value="InterPro"/>
</dbReference>
<dbReference type="GO" id="GO:0047334">
    <property type="term" value="F:diphosphate-fructose-6-phosphate 1-phosphotransferase activity"/>
    <property type="evidence" value="ECO:0007669"/>
    <property type="project" value="UniProtKB-EC"/>
</dbReference>
<dbReference type="GO" id="GO:0046872">
    <property type="term" value="F:metal ion binding"/>
    <property type="evidence" value="ECO:0007669"/>
    <property type="project" value="UniProtKB-KW"/>
</dbReference>
<dbReference type="GO" id="GO:0006002">
    <property type="term" value="P:fructose 6-phosphate metabolic process"/>
    <property type="evidence" value="ECO:0007669"/>
    <property type="project" value="InterPro"/>
</dbReference>
<dbReference type="FunFam" id="1.10.10.480:FF:000002">
    <property type="entry name" value="Pyrophosphate--fructose 6-phosphate 1-phosphotransferase subunit beta"/>
    <property type="match status" value="1"/>
</dbReference>
<dbReference type="Gene3D" id="3.40.50.450">
    <property type="match status" value="1"/>
</dbReference>
<dbReference type="Gene3D" id="3.40.50.460">
    <property type="entry name" value="Phosphofructokinase domain"/>
    <property type="match status" value="1"/>
</dbReference>
<dbReference type="Gene3D" id="1.10.10.480">
    <property type="entry name" value="Phosphofructokinase, domain 3"/>
    <property type="match status" value="1"/>
</dbReference>
<dbReference type="HAMAP" id="MF_01980">
    <property type="entry name" value="Phosphofructokinase_II_Long"/>
    <property type="match status" value="1"/>
</dbReference>
<dbReference type="InterPro" id="IPR022953">
    <property type="entry name" value="ATP_PFK"/>
</dbReference>
<dbReference type="InterPro" id="IPR011183">
    <property type="entry name" value="PfpB_PPi_PFK"/>
</dbReference>
<dbReference type="InterPro" id="IPR000023">
    <property type="entry name" value="Phosphofructokinase_dom"/>
</dbReference>
<dbReference type="InterPro" id="IPR035966">
    <property type="entry name" value="PKF_sf"/>
</dbReference>
<dbReference type="NCBIfam" id="TIGR02477">
    <property type="entry name" value="PFKA_PPi"/>
    <property type="match status" value="1"/>
</dbReference>
<dbReference type="NCBIfam" id="NF005482">
    <property type="entry name" value="PRK07085.1"/>
    <property type="match status" value="1"/>
</dbReference>
<dbReference type="PANTHER" id="PTHR43650">
    <property type="entry name" value="PYROPHOSPHATE--FRUCTOSE 6-PHOSPHATE 1-PHOSPHOTRANSFERASE"/>
    <property type="match status" value="1"/>
</dbReference>
<dbReference type="PANTHER" id="PTHR43650:SF29">
    <property type="entry name" value="PYROPHOSPHATE--FRUCTOSE 6-PHOSPHATE 1-PHOSPHOTRANSFERASE SUBUNIT BETA 1"/>
    <property type="match status" value="1"/>
</dbReference>
<dbReference type="Pfam" id="PF00365">
    <property type="entry name" value="PFK"/>
    <property type="match status" value="1"/>
</dbReference>
<dbReference type="PIRSF" id="PIRSF005677">
    <property type="entry name" value="PPi_PFK_PfpB"/>
    <property type="match status" value="1"/>
</dbReference>
<dbReference type="PRINTS" id="PR00476">
    <property type="entry name" value="PHFRCTKINASE"/>
</dbReference>
<dbReference type="SUPFAM" id="SSF53784">
    <property type="entry name" value="Phosphofructokinase"/>
    <property type="match status" value="1"/>
</dbReference>
<comment type="function">
    <text evidence="1">Catalytic subunit of pyrophosphate--fructose 6-phosphate 1-phosphotransferase. Catalyzes the phosphorylation of D-fructose 6-phosphate, the first committing step of glycolysis. Uses inorganic phosphate (PPi) as phosphoryl donor instead of ATP like common ATP-dependent phosphofructokinases (ATP-PFKs), which renders the reaction reversible, and can thus function both in glycolysis and gluconeogenesis.</text>
</comment>
<comment type="catalytic activity">
    <reaction evidence="1">
        <text>beta-D-fructose 6-phosphate + diphosphate = beta-D-fructose 1,6-bisphosphate + phosphate + H(+)</text>
        <dbReference type="Rhea" id="RHEA:13613"/>
        <dbReference type="ChEBI" id="CHEBI:15378"/>
        <dbReference type="ChEBI" id="CHEBI:32966"/>
        <dbReference type="ChEBI" id="CHEBI:33019"/>
        <dbReference type="ChEBI" id="CHEBI:43474"/>
        <dbReference type="ChEBI" id="CHEBI:57634"/>
        <dbReference type="EC" id="2.7.1.90"/>
    </reaction>
</comment>
<comment type="cofactor">
    <cofactor evidence="1">
        <name>Mg(2+)</name>
        <dbReference type="ChEBI" id="CHEBI:18420"/>
    </cofactor>
</comment>
<comment type="activity regulation">
    <text evidence="1">Allosterically activated by fructose 2,6-bisphosphate.</text>
</comment>
<comment type="pathway">
    <text evidence="1">Carbohydrate degradation; glycolysis; D-glyceraldehyde 3-phosphate and glycerone phosphate from D-glucose: step 3/4.</text>
</comment>
<comment type="subunit">
    <text evidence="1">Tetramer of two alpha (regulatory) and two beta (catalytic) chains.</text>
</comment>
<comment type="subcellular location">
    <subcellularLocation>
        <location evidence="1">Cytoplasm</location>
    </subcellularLocation>
</comment>
<comment type="similarity">
    <text evidence="1">Belongs to the phosphofructokinase type A (PFKA) family. PPi-dependent PFK group II subfamily. Clade 'Long' sub-subfamily.</text>
</comment>
<name>PFPB_RICCO</name>
<proteinExistence type="inferred from homology"/>
<keyword id="KW-0021">Allosteric enzyme</keyword>
<keyword id="KW-0963">Cytoplasm</keyword>
<keyword id="KW-0324">Glycolysis</keyword>
<keyword id="KW-0418">Kinase</keyword>
<keyword id="KW-0460">Magnesium</keyword>
<keyword id="KW-0479">Metal-binding</keyword>
<keyword id="KW-0808">Transferase</keyword>